<comment type="function">
    <text evidence="2 4 5">Part of the ESX-5 specialized secretion system, which is responsible for the secretion of EsxN and a number of PE_PGRS and PPE proteins, including PPE41 (PubMed:22340629, PubMed:22925462). EccA5 exhibits ATPase activity and may provide energy for the export of ESX-5 substrates (By similarity).</text>
</comment>
<comment type="subunit">
    <text evidence="2">Part of the ESX-5 / type VII secretion system (T7SS), which is composed of cytosolic and membrane components.</text>
</comment>
<comment type="subcellular location">
    <subcellularLocation>
        <location evidence="1">Cytoplasm</location>
    </subcellularLocation>
</comment>
<comment type="disruption phenotype">
    <text evidence="4">Deletion mutant does not secrete EsxN and shows a minor reduction of PPE41 secretion.</text>
</comment>
<comment type="similarity">
    <text evidence="7">Belongs to the CbxX/CfxQ family.</text>
</comment>
<name>ECCA5_MYCTU</name>
<evidence type="ECO:0000250" key="1">
    <source>
        <dbReference type="UniProtKB" id="B2HSU9"/>
    </source>
</evidence>
<evidence type="ECO:0000250" key="2">
    <source>
        <dbReference type="UniProtKB" id="P9WPH9"/>
    </source>
</evidence>
<evidence type="ECO:0000255" key="3"/>
<evidence type="ECO:0000269" key="4">
    <source>
    </source>
</evidence>
<evidence type="ECO:0000269" key="5">
    <source>
    </source>
</evidence>
<evidence type="ECO:0000303" key="6">
    <source>
    </source>
</evidence>
<evidence type="ECO:0000305" key="7"/>
<evidence type="ECO:0007744" key="8">
    <source>
    </source>
</evidence>
<evidence type="ECO:0007829" key="9">
    <source>
        <dbReference type="PDB" id="7VEP"/>
    </source>
</evidence>
<protein>
    <recommendedName>
        <fullName evidence="7">ESX-5 secretion system protein EccA5</fullName>
    </recommendedName>
    <alternativeName>
        <fullName evidence="6">ESX conserved component A5</fullName>
    </alternativeName>
    <alternativeName>
        <fullName evidence="7">Type VII secretion system protein EccA5</fullName>
        <shortName evidence="7">T7SS protein EccA5</shortName>
    </alternativeName>
</protein>
<feature type="initiator methionine" description="Removed" evidence="8">
    <location>
        <position position="1"/>
    </location>
</feature>
<feature type="chain" id="PRO_0000063046" description="ESX-5 secretion system protein EccA5">
    <location>
        <begin position="2"/>
        <end position="610"/>
    </location>
</feature>
<feature type="binding site" evidence="3">
    <location>
        <begin position="357"/>
        <end position="364"/>
    </location>
    <ligand>
        <name>ATP</name>
        <dbReference type="ChEBI" id="CHEBI:30616"/>
    </ligand>
</feature>
<feature type="modified residue" description="N-acetylthreonine" evidence="8">
    <location>
        <position position="2"/>
    </location>
</feature>
<feature type="helix" evidence="9">
    <location>
        <begin position="3"/>
        <end position="20"/>
    </location>
</feature>
<feature type="helix" evidence="9">
    <location>
        <begin position="35"/>
        <end position="48"/>
    </location>
</feature>
<feature type="helix" evidence="9">
    <location>
        <begin position="53"/>
        <end position="61"/>
    </location>
</feature>
<feature type="helix" evidence="9">
    <location>
        <begin position="67"/>
        <end position="75"/>
    </location>
</feature>
<feature type="helix" evidence="9">
    <location>
        <begin position="77"/>
        <end position="79"/>
    </location>
</feature>
<feature type="helix" evidence="9">
    <location>
        <begin position="82"/>
        <end position="87"/>
    </location>
</feature>
<feature type="turn" evidence="9">
    <location>
        <begin position="91"/>
        <end position="93"/>
    </location>
</feature>
<feature type="strand" evidence="9">
    <location>
        <begin position="97"/>
        <end position="99"/>
    </location>
</feature>
<feature type="strand" evidence="9">
    <location>
        <begin position="101"/>
        <end position="103"/>
    </location>
</feature>
<feature type="strand" evidence="9">
    <location>
        <begin position="105"/>
        <end position="107"/>
    </location>
</feature>
<feature type="helix" evidence="9">
    <location>
        <begin position="111"/>
        <end position="124"/>
    </location>
</feature>
<feature type="helix" evidence="9">
    <location>
        <begin position="128"/>
        <end position="136"/>
    </location>
</feature>
<feature type="helix" evidence="9">
    <location>
        <begin position="143"/>
        <end position="159"/>
    </location>
</feature>
<feature type="helix" evidence="9">
    <location>
        <begin position="163"/>
        <end position="169"/>
    </location>
</feature>
<feature type="helix" evidence="9">
    <location>
        <begin position="179"/>
        <end position="195"/>
    </location>
</feature>
<feature type="helix" evidence="9">
    <location>
        <begin position="199"/>
        <end position="210"/>
    </location>
</feature>
<feature type="helix" evidence="9">
    <location>
        <begin position="211"/>
        <end position="213"/>
    </location>
</feature>
<feature type="helix" evidence="9">
    <location>
        <begin position="216"/>
        <end position="232"/>
    </location>
</feature>
<feature type="helix" evidence="9">
    <location>
        <begin position="236"/>
        <end position="249"/>
    </location>
</feature>
<feature type="helix" evidence="9">
    <location>
        <begin position="254"/>
        <end position="261"/>
    </location>
</feature>
<organism>
    <name type="scientific">Mycobacterium tuberculosis (strain ATCC 25618 / H37Rv)</name>
    <dbReference type="NCBI Taxonomy" id="83332"/>
    <lineage>
        <taxon>Bacteria</taxon>
        <taxon>Bacillati</taxon>
        <taxon>Actinomycetota</taxon>
        <taxon>Actinomycetes</taxon>
        <taxon>Mycobacteriales</taxon>
        <taxon>Mycobacteriaceae</taxon>
        <taxon>Mycobacterium</taxon>
        <taxon>Mycobacterium tuberculosis complex</taxon>
    </lineage>
</organism>
<accession>P9WPI1</accession>
<accession>L0TAM8</accession>
<accession>O53947</accession>
<accession>P63744</accession>
<gene>
    <name evidence="6" type="primary">eccA5</name>
    <name type="ordered locus">Rv1798</name>
    <name type="ORF">MTV049.20</name>
</gene>
<reference key="1">
    <citation type="journal article" date="1998" name="Nature">
        <title>Deciphering the biology of Mycobacterium tuberculosis from the complete genome sequence.</title>
        <authorList>
            <person name="Cole S.T."/>
            <person name="Brosch R."/>
            <person name="Parkhill J."/>
            <person name="Garnier T."/>
            <person name="Churcher C.M."/>
            <person name="Harris D.E."/>
            <person name="Gordon S.V."/>
            <person name="Eiglmeier K."/>
            <person name="Gas S."/>
            <person name="Barry C.E. III"/>
            <person name="Tekaia F."/>
            <person name="Badcock K."/>
            <person name="Basham D."/>
            <person name="Brown D."/>
            <person name="Chillingworth T."/>
            <person name="Connor R."/>
            <person name="Davies R.M."/>
            <person name="Devlin K."/>
            <person name="Feltwell T."/>
            <person name="Gentles S."/>
            <person name="Hamlin N."/>
            <person name="Holroyd S."/>
            <person name="Hornsby T."/>
            <person name="Jagels K."/>
            <person name="Krogh A."/>
            <person name="McLean J."/>
            <person name="Moule S."/>
            <person name="Murphy L.D."/>
            <person name="Oliver S."/>
            <person name="Osborne J."/>
            <person name="Quail M.A."/>
            <person name="Rajandream M.A."/>
            <person name="Rogers J."/>
            <person name="Rutter S."/>
            <person name="Seeger K."/>
            <person name="Skelton S."/>
            <person name="Squares S."/>
            <person name="Squares R."/>
            <person name="Sulston J.E."/>
            <person name="Taylor K."/>
            <person name="Whitehead S."/>
            <person name="Barrell B.G."/>
        </authorList>
    </citation>
    <scope>NUCLEOTIDE SEQUENCE [LARGE SCALE GENOMIC DNA]</scope>
    <source>
        <strain>ATCC 25618 / H37Rv</strain>
    </source>
</reference>
<reference key="2">
    <citation type="journal article" date="2009" name="PLoS Pathog.">
        <title>Systematic genetic nomenclature for type VII secretion systems.</title>
        <authorList>
            <person name="Bitter W."/>
            <person name="Houben E.N."/>
            <person name="Bottai D."/>
            <person name="Brodin P."/>
            <person name="Brown E.J."/>
            <person name="Cox J.S."/>
            <person name="Derbyshire K."/>
            <person name="Fortune S.M."/>
            <person name="Gao L.Y."/>
            <person name="Liu J."/>
            <person name="Gey van Pittius N.C."/>
            <person name="Pym A.S."/>
            <person name="Rubin E.J."/>
            <person name="Sherman D.R."/>
            <person name="Cole S.T."/>
            <person name="Brosch R."/>
        </authorList>
    </citation>
    <scope>NOMENCLATURE</scope>
</reference>
<reference key="3">
    <citation type="journal article" date="2011" name="Mol. Cell. Proteomics">
        <title>Proteogenomic analysis of Mycobacterium tuberculosis by high resolution mass spectrometry.</title>
        <authorList>
            <person name="Kelkar D.S."/>
            <person name="Kumar D."/>
            <person name="Kumar P."/>
            <person name="Balakrishnan L."/>
            <person name="Muthusamy B."/>
            <person name="Yadav A.K."/>
            <person name="Shrivastava P."/>
            <person name="Marimuthu A."/>
            <person name="Anand S."/>
            <person name="Sundaram H."/>
            <person name="Kingsbury R."/>
            <person name="Harsha H.C."/>
            <person name="Nair B."/>
            <person name="Prasad T.S."/>
            <person name="Chauhan D.S."/>
            <person name="Katoch K."/>
            <person name="Katoch V.M."/>
            <person name="Kumar P."/>
            <person name="Chaerkady R."/>
            <person name="Ramachandran S."/>
            <person name="Dash D."/>
            <person name="Pandey A."/>
        </authorList>
    </citation>
    <scope>ACETYLATION [LARGE SCALE ANALYSIS] AT THR-2</scope>
    <scope>CLEAVAGE OF INITIATOR METHIONINE [LARGE SCALE ANALYSIS]</scope>
    <scope>IDENTIFICATION BY MASS SPECTROMETRY [LARGE SCALE ANALYSIS]</scope>
    <source>
        <strain>ATCC 25618 / H37Rv</strain>
    </source>
</reference>
<reference key="4">
    <citation type="journal article" date="2012" name="Mol. Microbiol.">
        <title>Disruption of the ESX-5 system of Mycobacterium tuberculosis causes loss of PPE protein secretion, reduction of cell wall integrity and strong attenuation.</title>
        <authorList>
            <person name="Bottai D."/>
            <person name="Di Luca M."/>
            <person name="Majlessi L."/>
            <person name="Frigui W."/>
            <person name="Simeone R."/>
            <person name="Sayes F."/>
            <person name="Bitter W."/>
            <person name="Brennan M.J."/>
            <person name="Leclerc C."/>
            <person name="Batoni G."/>
            <person name="Campa M."/>
            <person name="Brosch R."/>
            <person name="Esin S."/>
        </authorList>
    </citation>
    <scope>FUNCTION</scope>
    <scope>DISRUPTION PHENOTYPE</scope>
    <source>
        <strain>H37Rv</strain>
    </source>
</reference>
<reference key="5">
    <citation type="journal article" date="2012" name="Mol. Microbiol.">
        <title>Composition of the type VII secretion system membrane complex.</title>
        <authorList>
            <person name="Houben E.N."/>
            <person name="Bestebroer J."/>
            <person name="Ummels R."/>
            <person name="Wilson L."/>
            <person name="Piersma S.R."/>
            <person name="Jimenez C.R."/>
            <person name="Ottenhoff T.H."/>
            <person name="Luirink J."/>
            <person name="Bitter W."/>
        </authorList>
    </citation>
    <scope>FUNCTION</scope>
</reference>
<keyword id="KW-0002">3D-structure</keyword>
<keyword id="KW-0007">Acetylation</keyword>
<keyword id="KW-0067">ATP-binding</keyword>
<keyword id="KW-0963">Cytoplasm</keyword>
<keyword id="KW-0547">Nucleotide-binding</keyword>
<keyword id="KW-1185">Reference proteome</keyword>
<proteinExistence type="evidence at protein level"/>
<sequence length="610" mass="67756">MTRPQAAAEDARNAMVAGLLASGISVNGLQPSHNPQVAAQMFTTATRLDPKMCDAWLARLLAGDQSIEVLAGAWAAVRTFGWETRRLGVTDLQFRPEVSDGLFLRLAITSVDSLACAYAAVLAEAKRYQEAAELLDATDPRHPFDAELVSYVRGVLYFRTKRWPDVLAQFPEATQWRHPELKAAGAAMATTALASLGVFEEAFRRAQEAIEGDRVPGAANIALYTQGMCLRHVGREEEAVELLRRVYSRDAKFTPAREALDNPNFRLILTDPETIEARTDPWDPDSAPTRAQTEAARHAEMAAKYLAEGDAELNAMLGMEQAKKEIKLIKSTTKVNLARAKMGLPVPVTSRHTLLLGPPGTGKTSVARAFTKQLCGLTVLRKPLVVETSRTKLLGRYMADAEKNTEEMLEGALGGAVFFDEMHTLHEKGYSQGDPYGNAIINTLLLYMENHRDELVVFGAGYAKAMEKMLEVNQGLRRRFSTVIEFFSYTPQELIALTQLMGRENEDVITEEESQVLLPSYTKFYMEQSYSEDGDLIRGIDLLGNAGFVRNVVEKARDHRSFRLDDEDLDAVLASDLTEFSEDQLRRFKELTREDLAEGLRAAVAEKKTK</sequence>
<dbReference type="EMBL" id="AL123456">
    <property type="protein sequence ID" value="CCP44564.1"/>
    <property type="molecule type" value="Genomic_DNA"/>
</dbReference>
<dbReference type="PIR" id="G70930">
    <property type="entry name" value="G70930"/>
</dbReference>
<dbReference type="RefSeq" id="NP_216314.1">
    <property type="nucleotide sequence ID" value="NC_000962.3"/>
</dbReference>
<dbReference type="RefSeq" id="WP_003408868.1">
    <property type="nucleotide sequence ID" value="NZ_NVQJ01000037.1"/>
</dbReference>
<dbReference type="PDB" id="7VEP">
    <property type="method" value="X-ray"/>
    <property type="resolution" value="2.15 A"/>
    <property type="chains" value="A=1-278"/>
</dbReference>
<dbReference type="PDBsum" id="7VEP"/>
<dbReference type="SASBDB" id="P9WPI1"/>
<dbReference type="SMR" id="P9WPI1"/>
<dbReference type="STRING" id="83332.Rv1798"/>
<dbReference type="iPTMnet" id="P9WPI1"/>
<dbReference type="PaxDb" id="83332-Rv1798"/>
<dbReference type="GeneID" id="45425775"/>
<dbReference type="GeneID" id="885543"/>
<dbReference type="KEGG" id="mtu:Rv1798"/>
<dbReference type="KEGG" id="mtv:RVBD_1798"/>
<dbReference type="TubercuList" id="Rv1798"/>
<dbReference type="eggNOG" id="COG0457">
    <property type="taxonomic scope" value="Bacteria"/>
</dbReference>
<dbReference type="eggNOG" id="COG0464">
    <property type="taxonomic scope" value="Bacteria"/>
</dbReference>
<dbReference type="InParanoid" id="P9WPI1"/>
<dbReference type="OrthoDB" id="9806903at2"/>
<dbReference type="PhylomeDB" id="P9WPI1"/>
<dbReference type="Proteomes" id="UP000001584">
    <property type="component" value="Chromosome"/>
</dbReference>
<dbReference type="GO" id="GO:0005737">
    <property type="term" value="C:cytoplasm"/>
    <property type="evidence" value="ECO:0007669"/>
    <property type="project" value="UniProtKB-SubCell"/>
</dbReference>
<dbReference type="GO" id="GO:0005886">
    <property type="term" value="C:plasma membrane"/>
    <property type="evidence" value="ECO:0007005"/>
    <property type="project" value="MTBBASE"/>
</dbReference>
<dbReference type="GO" id="GO:0005524">
    <property type="term" value="F:ATP binding"/>
    <property type="evidence" value="ECO:0007669"/>
    <property type="project" value="UniProtKB-KW"/>
</dbReference>
<dbReference type="GO" id="GO:0016887">
    <property type="term" value="F:ATP hydrolysis activity"/>
    <property type="evidence" value="ECO:0000318"/>
    <property type="project" value="GO_Central"/>
</dbReference>
<dbReference type="FunFam" id="1.10.8.60:FF:000168">
    <property type="entry name" value="ESX-5 type VII secretion system protein EccA"/>
    <property type="match status" value="1"/>
</dbReference>
<dbReference type="FunFam" id="1.25.40.10:FF:000424">
    <property type="entry name" value="Type VII secretion AAA-ATPase EccA"/>
    <property type="match status" value="1"/>
</dbReference>
<dbReference type="FunFam" id="3.40.50.300:FF:001169">
    <property type="entry name" value="Type VII secretion AAA-ATPase EccA"/>
    <property type="match status" value="1"/>
</dbReference>
<dbReference type="Gene3D" id="1.10.8.60">
    <property type="match status" value="1"/>
</dbReference>
<dbReference type="Gene3D" id="3.40.50.300">
    <property type="entry name" value="P-loop containing nucleotide triphosphate hydrolases"/>
    <property type="match status" value="1"/>
</dbReference>
<dbReference type="Gene3D" id="1.25.40.10">
    <property type="entry name" value="Tetratricopeptide repeat domain"/>
    <property type="match status" value="1"/>
</dbReference>
<dbReference type="InterPro" id="IPR003593">
    <property type="entry name" value="AAA+_ATPase"/>
</dbReference>
<dbReference type="InterPro" id="IPR003959">
    <property type="entry name" value="ATPase_AAA_core"/>
</dbReference>
<dbReference type="InterPro" id="IPR000641">
    <property type="entry name" value="CbxX/CfxQ"/>
</dbReference>
<dbReference type="InterPro" id="IPR050773">
    <property type="entry name" value="CbxX/CfxQ_RuBisCO_ESX"/>
</dbReference>
<dbReference type="InterPro" id="IPR027417">
    <property type="entry name" value="P-loop_NTPase"/>
</dbReference>
<dbReference type="InterPro" id="IPR023835">
    <property type="entry name" value="T7SS_EccA"/>
</dbReference>
<dbReference type="InterPro" id="IPR049078">
    <property type="entry name" value="T7SS_EccA1-like_N"/>
</dbReference>
<dbReference type="InterPro" id="IPR011990">
    <property type="entry name" value="TPR-like_helical_dom_sf"/>
</dbReference>
<dbReference type="NCBIfam" id="TIGR03922">
    <property type="entry name" value="T7SS_EccA"/>
    <property type="match status" value="1"/>
</dbReference>
<dbReference type="PANTHER" id="PTHR43392">
    <property type="entry name" value="AAA-TYPE ATPASE FAMILY PROTEIN / ANKYRIN REPEAT FAMILY PROTEIN"/>
    <property type="match status" value="1"/>
</dbReference>
<dbReference type="PANTHER" id="PTHR43392:SF2">
    <property type="entry name" value="AAA-TYPE ATPASE FAMILY PROTEIN _ ANKYRIN REPEAT FAMILY PROTEIN"/>
    <property type="match status" value="1"/>
</dbReference>
<dbReference type="Pfam" id="PF00004">
    <property type="entry name" value="AAA"/>
    <property type="match status" value="1"/>
</dbReference>
<dbReference type="Pfam" id="PF21545">
    <property type="entry name" value="T7SS_EccA1_N"/>
    <property type="match status" value="1"/>
</dbReference>
<dbReference type="PRINTS" id="PR00819">
    <property type="entry name" value="CBXCFQXSUPER"/>
</dbReference>
<dbReference type="SMART" id="SM00382">
    <property type="entry name" value="AAA"/>
    <property type="match status" value="1"/>
</dbReference>
<dbReference type="SUPFAM" id="SSF52540">
    <property type="entry name" value="P-loop containing nucleoside triphosphate hydrolases"/>
    <property type="match status" value="1"/>
</dbReference>
<dbReference type="SUPFAM" id="SSF48452">
    <property type="entry name" value="TPR-like"/>
    <property type="match status" value="1"/>
</dbReference>